<accession>A6Q168</accession>
<reference key="1">
    <citation type="journal article" date="2007" name="Proc. Natl. Acad. Sci. U.S.A.">
        <title>Deep-sea vent epsilon-proteobacterial genomes provide insights into emergence of pathogens.</title>
        <authorList>
            <person name="Nakagawa S."/>
            <person name="Takaki Y."/>
            <person name="Shimamura S."/>
            <person name="Reysenbach A.-L."/>
            <person name="Takai K."/>
            <person name="Horikoshi K."/>
        </authorList>
    </citation>
    <scope>NUCLEOTIDE SEQUENCE [LARGE SCALE GENOMIC DNA]</scope>
    <source>
        <strain>SB155-2</strain>
    </source>
</reference>
<feature type="chain" id="PRO_1000050728" description="Large ribosomal subunit protein bL35">
    <location>
        <begin position="1"/>
        <end position="64"/>
    </location>
</feature>
<feature type="region of interest" description="Disordered" evidence="2">
    <location>
        <begin position="1"/>
        <end position="23"/>
    </location>
</feature>
<keyword id="KW-1185">Reference proteome</keyword>
<keyword id="KW-0687">Ribonucleoprotein</keyword>
<keyword id="KW-0689">Ribosomal protein</keyword>
<protein>
    <recommendedName>
        <fullName evidence="1">Large ribosomal subunit protein bL35</fullName>
    </recommendedName>
    <alternativeName>
        <fullName evidence="3">50S ribosomal protein L35</fullName>
    </alternativeName>
</protein>
<evidence type="ECO:0000255" key="1">
    <source>
        <dbReference type="HAMAP-Rule" id="MF_00514"/>
    </source>
</evidence>
<evidence type="ECO:0000256" key="2">
    <source>
        <dbReference type="SAM" id="MobiDB-lite"/>
    </source>
</evidence>
<evidence type="ECO:0000305" key="3"/>
<dbReference type="EMBL" id="AP009178">
    <property type="protein sequence ID" value="BAF69227.1"/>
    <property type="molecule type" value="Genomic_DNA"/>
</dbReference>
<dbReference type="RefSeq" id="WP_011979653.1">
    <property type="nucleotide sequence ID" value="NC_009662.1"/>
</dbReference>
<dbReference type="SMR" id="A6Q168"/>
<dbReference type="FunCoup" id="A6Q168">
    <property type="interactions" value="334"/>
</dbReference>
<dbReference type="STRING" id="387092.NIS_0110"/>
<dbReference type="KEGG" id="nis:NIS_0110"/>
<dbReference type="eggNOG" id="COG0291">
    <property type="taxonomic scope" value="Bacteria"/>
</dbReference>
<dbReference type="HOGENOM" id="CLU_169643_4_3_7"/>
<dbReference type="InParanoid" id="A6Q168"/>
<dbReference type="OrthoDB" id="9804851at2"/>
<dbReference type="Proteomes" id="UP000001118">
    <property type="component" value="Chromosome"/>
</dbReference>
<dbReference type="GO" id="GO:0022625">
    <property type="term" value="C:cytosolic large ribosomal subunit"/>
    <property type="evidence" value="ECO:0007669"/>
    <property type="project" value="TreeGrafter"/>
</dbReference>
<dbReference type="GO" id="GO:0003735">
    <property type="term" value="F:structural constituent of ribosome"/>
    <property type="evidence" value="ECO:0007669"/>
    <property type="project" value="InterPro"/>
</dbReference>
<dbReference type="GO" id="GO:0006412">
    <property type="term" value="P:translation"/>
    <property type="evidence" value="ECO:0007669"/>
    <property type="project" value="UniProtKB-UniRule"/>
</dbReference>
<dbReference type="FunFam" id="4.10.410.60:FF:000001">
    <property type="entry name" value="50S ribosomal protein L35"/>
    <property type="match status" value="1"/>
</dbReference>
<dbReference type="Gene3D" id="4.10.410.60">
    <property type="match status" value="1"/>
</dbReference>
<dbReference type="HAMAP" id="MF_00514">
    <property type="entry name" value="Ribosomal_bL35"/>
    <property type="match status" value="1"/>
</dbReference>
<dbReference type="InterPro" id="IPR001706">
    <property type="entry name" value="Ribosomal_bL35"/>
</dbReference>
<dbReference type="InterPro" id="IPR021137">
    <property type="entry name" value="Ribosomal_bL35-like"/>
</dbReference>
<dbReference type="InterPro" id="IPR018265">
    <property type="entry name" value="Ribosomal_bL35_CS"/>
</dbReference>
<dbReference type="InterPro" id="IPR037229">
    <property type="entry name" value="Ribosomal_bL35_sf"/>
</dbReference>
<dbReference type="NCBIfam" id="TIGR00001">
    <property type="entry name" value="rpmI_bact"/>
    <property type="match status" value="1"/>
</dbReference>
<dbReference type="PANTHER" id="PTHR33343">
    <property type="entry name" value="54S RIBOSOMAL PROTEIN BL35M"/>
    <property type="match status" value="1"/>
</dbReference>
<dbReference type="PANTHER" id="PTHR33343:SF1">
    <property type="entry name" value="LARGE RIBOSOMAL SUBUNIT PROTEIN BL35M"/>
    <property type="match status" value="1"/>
</dbReference>
<dbReference type="Pfam" id="PF01632">
    <property type="entry name" value="Ribosomal_L35p"/>
    <property type="match status" value="1"/>
</dbReference>
<dbReference type="PRINTS" id="PR00064">
    <property type="entry name" value="RIBOSOMALL35"/>
</dbReference>
<dbReference type="SUPFAM" id="SSF143034">
    <property type="entry name" value="L35p-like"/>
    <property type="match status" value="1"/>
</dbReference>
<dbReference type="PROSITE" id="PS00936">
    <property type="entry name" value="RIBOSOMAL_L35"/>
    <property type="match status" value="1"/>
</dbReference>
<sequence length="64" mass="7514">MPKMKTHRGAAKRFKKTKNKIKRGSAFRSHILTKKSPKTKRHLRAPHYVSKVDEPRVIELISTY</sequence>
<organism>
    <name type="scientific">Nitratiruptor sp. (strain SB155-2)</name>
    <dbReference type="NCBI Taxonomy" id="387092"/>
    <lineage>
        <taxon>Bacteria</taxon>
        <taxon>Pseudomonadati</taxon>
        <taxon>Campylobacterota</taxon>
        <taxon>Epsilonproteobacteria</taxon>
        <taxon>Nautiliales</taxon>
        <taxon>Nitratiruptoraceae</taxon>
        <taxon>Nitratiruptor</taxon>
    </lineage>
</organism>
<comment type="similarity">
    <text evidence="1">Belongs to the bacterial ribosomal protein bL35 family.</text>
</comment>
<gene>
    <name evidence="1" type="primary">rpmI</name>
    <name type="ordered locus">NIS_0110</name>
</gene>
<proteinExistence type="inferred from homology"/>
<name>RL35_NITSB</name>